<feature type="chain" id="PRO_0000093851" description="Auxin transporter-like protein 2">
    <location>
        <begin position="1"/>
        <end position="482"/>
    </location>
</feature>
<feature type="topological domain" description="Cytoplasmic" evidence="2">
    <location>
        <begin position="1"/>
        <end position="58"/>
    </location>
</feature>
<feature type="transmembrane region" description="Helical" evidence="2">
    <location>
        <begin position="59"/>
        <end position="76"/>
    </location>
</feature>
<feature type="topological domain" description="Extracellular" evidence="2">
    <location>
        <begin position="77"/>
        <end position="78"/>
    </location>
</feature>
<feature type="transmembrane region" description="Helical" evidence="2">
    <location>
        <begin position="79"/>
        <end position="99"/>
    </location>
</feature>
<feature type="topological domain" description="Cytoplasmic" evidence="2">
    <location>
        <begin position="100"/>
        <end position="134"/>
    </location>
</feature>
<feature type="transmembrane region" description="Helical" evidence="2">
    <location>
        <begin position="135"/>
        <end position="155"/>
    </location>
</feature>
<feature type="topological domain" description="Extracellular" evidence="2">
    <location>
        <begin position="156"/>
        <end position="171"/>
    </location>
</feature>
<feature type="transmembrane region" description="Helical" evidence="2">
    <location>
        <begin position="172"/>
        <end position="192"/>
    </location>
</feature>
<feature type="topological domain" description="Cytoplasmic" evidence="2">
    <location>
        <position position="193"/>
    </location>
</feature>
<feature type="transmembrane region" description="Helical" evidence="2">
    <location>
        <begin position="194"/>
        <end position="214"/>
    </location>
</feature>
<feature type="topological domain" description="Extracellular" evidence="2">
    <location>
        <begin position="215"/>
        <end position="231"/>
    </location>
</feature>
<feature type="transmembrane region" description="Helical" evidence="2">
    <location>
        <begin position="232"/>
        <end position="252"/>
    </location>
</feature>
<feature type="topological domain" description="Cytoplasmic" evidence="2">
    <location>
        <begin position="253"/>
        <end position="265"/>
    </location>
</feature>
<feature type="transmembrane region" description="Helical" evidence="2">
    <location>
        <begin position="266"/>
        <end position="286"/>
    </location>
</feature>
<feature type="topological domain" description="Extracellular" evidence="2">
    <location>
        <begin position="287"/>
        <end position="313"/>
    </location>
</feature>
<feature type="transmembrane region" description="Helical" evidence="2">
    <location>
        <begin position="314"/>
        <end position="334"/>
    </location>
</feature>
<feature type="topological domain" description="Cytoplasmic" evidence="2">
    <location>
        <begin position="335"/>
        <end position="355"/>
    </location>
</feature>
<feature type="transmembrane region" description="Helical" evidence="2">
    <location>
        <begin position="356"/>
        <end position="376"/>
    </location>
</feature>
<feature type="topological domain" description="Extracellular" evidence="2">
    <location>
        <position position="377"/>
    </location>
</feature>
<feature type="transmembrane region" description="Helical" evidence="2">
    <location>
        <begin position="378"/>
        <end position="398"/>
    </location>
</feature>
<feature type="topological domain" description="Cytoplasmic" evidence="2">
    <location>
        <begin position="399"/>
        <end position="423"/>
    </location>
</feature>
<feature type="transmembrane region" description="Helical" evidence="2">
    <location>
        <begin position="424"/>
        <end position="444"/>
    </location>
</feature>
<feature type="topological domain" description="Extracellular" evidence="2">
    <location>
        <begin position="445"/>
        <end position="482"/>
    </location>
</feature>
<feature type="splice variant" id="VSP_017012" description="In isoform 2." evidence="3">
    <original>V</original>
    <variation>VRPTTNDLVMPLAHISFGILQV</variation>
    <location>
        <position position="59"/>
    </location>
</feature>
<feature type="sequence conflict" description="In Ref. 5; AK111849." evidence="4" ref="5">
    <original>S</original>
    <variation>G</variation>
    <location>
        <position position="446"/>
    </location>
</feature>
<organism>
    <name type="scientific">Oryza sativa subsp. japonica</name>
    <name type="common">Rice</name>
    <dbReference type="NCBI Taxonomy" id="39947"/>
    <lineage>
        <taxon>Eukaryota</taxon>
        <taxon>Viridiplantae</taxon>
        <taxon>Streptophyta</taxon>
        <taxon>Embryophyta</taxon>
        <taxon>Tracheophyta</taxon>
        <taxon>Spermatophyta</taxon>
        <taxon>Magnoliopsida</taxon>
        <taxon>Liliopsida</taxon>
        <taxon>Poales</taxon>
        <taxon>Poaceae</taxon>
        <taxon>BOP clade</taxon>
        <taxon>Oryzoideae</taxon>
        <taxon>Oryzeae</taxon>
        <taxon>Oryzinae</taxon>
        <taxon>Oryza</taxon>
        <taxon>Oryza sativa</taxon>
    </lineage>
</organism>
<sequence>MVPAGDQAEEAIVADAGKEEAEVRAAMGVEQDGKFSMTSLLWHGGSVWDAWFSCASNQVAQVLLTLPYSFSQLGMLSGLLLQVFYGLMGSWTAYLISVLYVEYRARKEKEGVSFKNHVIQWFEVLDGLLGPYWKAAGLAFNCTFLLFGSVIQLIACASNIYYINDRLDKRTWTYIFGACCSTTVFIPSFHNYRIWSFLGLGMTTYTAWYLAIAAAVHGQVDGVTHSGPSKMVLYFTGATNILYTFGGHAVTVEIMHAMWKPQKFKYIYLVATLYVFTLTLPSASAMYWAFGDALLTHSNAFSLLPRSGWRDAAVILMLIHQFITFGFACTPLYFVWEKAIGMHGTRSVLTRALARLPIVVPIWFLAIIFPFFGPINSAVGALLVSFTVYIIPSLSHILTYRSASARLNAAEKPPPFLPSWSGMFVVNVFVVAWVLVVGFGLGGWASVTNFIKQIDTFGLFAKCYQCPPRAHAGAPLPAPPRH</sequence>
<dbReference type="EMBL" id="AC135421">
    <property type="protein sequence ID" value="AAU10758.1"/>
    <property type="molecule type" value="Genomic_DNA"/>
</dbReference>
<dbReference type="EMBL" id="AP008211">
    <property type="protein sequence ID" value="BAF17607.1"/>
    <property type="molecule type" value="Genomic_DNA"/>
</dbReference>
<dbReference type="EMBL" id="AP014961">
    <property type="protein sequence ID" value="BAS94291.1"/>
    <property type="molecule type" value="Genomic_DNA"/>
</dbReference>
<dbReference type="EMBL" id="AP014961">
    <property type="protein sequence ID" value="BAS94292.1"/>
    <property type="molecule type" value="Genomic_DNA"/>
</dbReference>
<dbReference type="EMBL" id="AK111659">
    <property type="status" value="NOT_ANNOTATED_CDS"/>
    <property type="molecule type" value="mRNA"/>
</dbReference>
<dbReference type="EMBL" id="AK111849">
    <property type="status" value="NOT_ANNOTATED_CDS"/>
    <property type="molecule type" value="mRNA"/>
</dbReference>
<dbReference type="RefSeq" id="XP_015637481.1">
    <molecule id="Q688J2-2"/>
    <property type="nucleotide sequence ID" value="XM_015781995.1"/>
</dbReference>
<dbReference type="RefSeq" id="XP_015637482.1">
    <property type="nucleotide sequence ID" value="XM_015781996.1"/>
</dbReference>
<dbReference type="SMR" id="Q688J2"/>
<dbReference type="FunCoup" id="Q688J2">
    <property type="interactions" value="23"/>
</dbReference>
<dbReference type="STRING" id="39947.Q688J2"/>
<dbReference type="PaxDb" id="39947-Q688J2"/>
<dbReference type="EnsemblPlants" id="Os05t0447200-02">
    <molecule id="Q688J2-1"/>
    <property type="protein sequence ID" value="Os05t0447200-02"/>
    <property type="gene ID" value="Os05g0447200"/>
</dbReference>
<dbReference type="Gramene" id="Os05t0447200-02">
    <molecule id="Q688J2-1"/>
    <property type="protein sequence ID" value="Os05t0447200-02"/>
    <property type="gene ID" value="Os05g0447200"/>
</dbReference>
<dbReference type="KEGG" id="dosa:Os05g0447200"/>
<dbReference type="eggNOG" id="KOG1303">
    <property type="taxonomic scope" value="Eukaryota"/>
</dbReference>
<dbReference type="InParanoid" id="Q688J2"/>
<dbReference type="OMA" id="HAEESIM"/>
<dbReference type="OrthoDB" id="40134at2759"/>
<dbReference type="Proteomes" id="UP000000763">
    <property type="component" value="Chromosome 5"/>
</dbReference>
<dbReference type="Proteomes" id="UP000059680">
    <property type="component" value="Chromosome 5"/>
</dbReference>
<dbReference type="ExpressionAtlas" id="Q688J2">
    <property type="expression patterns" value="baseline and differential"/>
</dbReference>
<dbReference type="GO" id="GO:0016020">
    <property type="term" value="C:membrane"/>
    <property type="evidence" value="ECO:0000318"/>
    <property type="project" value="GO_Central"/>
</dbReference>
<dbReference type="GO" id="GO:0005886">
    <property type="term" value="C:plasma membrane"/>
    <property type="evidence" value="ECO:0007669"/>
    <property type="project" value="UniProtKB-SubCell"/>
</dbReference>
<dbReference type="GO" id="GO:0015171">
    <property type="term" value="F:amino acid transmembrane transporter activity"/>
    <property type="evidence" value="ECO:0000318"/>
    <property type="project" value="GO_Central"/>
</dbReference>
<dbReference type="GO" id="GO:0015293">
    <property type="term" value="F:symporter activity"/>
    <property type="evidence" value="ECO:0007669"/>
    <property type="project" value="UniProtKB-KW"/>
</dbReference>
<dbReference type="GO" id="GO:0003333">
    <property type="term" value="P:amino acid transmembrane transport"/>
    <property type="evidence" value="ECO:0000318"/>
    <property type="project" value="GO_Central"/>
</dbReference>
<dbReference type="GO" id="GO:0009734">
    <property type="term" value="P:auxin-activated signaling pathway"/>
    <property type="evidence" value="ECO:0007669"/>
    <property type="project" value="UniProtKB-KW"/>
</dbReference>
<dbReference type="InterPro" id="IPR013057">
    <property type="entry name" value="AA_transpt_TM"/>
</dbReference>
<dbReference type="PANTHER" id="PTHR48017">
    <property type="entry name" value="OS05G0424000 PROTEIN-RELATED"/>
    <property type="match status" value="1"/>
</dbReference>
<dbReference type="Pfam" id="PF01490">
    <property type="entry name" value="Aa_trans"/>
    <property type="match status" value="1"/>
</dbReference>
<protein>
    <recommendedName>
        <fullName>Auxin transporter-like protein 2</fullName>
    </recommendedName>
</protein>
<gene>
    <name type="ordered locus">Os05g0447200</name>
    <name type="ordered locus">LOC_Os05g37470</name>
    <name type="ORF">OSJNBb0012G21.5</name>
</gene>
<comment type="function">
    <text evidence="1">Carrier protein involved in proton-driven auxin influx. May mediate the formation of auxin gradient from developing leaves (site of auxin biosynthesis) to tips (By similarity).</text>
</comment>
<comment type="subcellular location">
    <subcellularLocation>
        <location evidence="1">Cell membrane</location>
        <topology evidence="1">Multi-pass membrane protein</topology>
    </subcellularLocation>
</comment>
<comment type="alternative products">
    <event type="alternative splicing"/>
    <isoform>
        <id>Q688J2-1</id>
        <name>1</name>
        <sequence type="displayed"/>
    </isoform>
    <isoform>
        <id>Q688J2-2</id>
        <name>2</name>
        <sequence type="described" ref="VSP_017012"/>
    </isoform>
</comment>
<comment type="miscellaneous">
    <molecule>Isoform 2</molecule>
    <text evidence="4">May be due to intron retention.</text>
</comment>
<comment type="similarity">
    <text evidence="4">Belongs to the amino acid/polyamine transporter 2 family. Amino acid/auxin permease (AAAP) (TC 2.A.18.1) subfamily.</text>
</comment>
<keyword id="KW-0025">Alternative splicing</keyword>
<keyword id="KW-0029">Amino-acid transport</keyword>
<keyword id="KW-0927">Auxin signaling pathway</keyword>
<keyword id="KW-1003">Cell membrane</keyword>
<keyword id="KW-0472">Membrane</keyword>
<keyword id="KW-1185">Reference proteome</keyword>
<keyword id="KW-0769">Symport</keyword>
<keyword id="KW-0812">Transmembrane</keyword>
<keyword id="KW-1133">Transmembrane helix</keyword>
<keyword id="KW-0813">Transport</keyword>
<proteinExistence type="evidence at transcript level"/>
<name>LAX12_ORYSJ</name>
<accession>Q688J2</accession>
<accession>Q0DHR6</accession>
<reference key="1">
    <citation type="journal article" date="2005" name="Mol. Genet. Genomics">
        <title>A fine physical map of the rice chromosome 5.</title>
        <authorList>
            <person name="Cheng C.-H."/>
            <person name="Chung M.C."/>
            <person name="Liu S.-M."/>
            <person name="Chen S.-K."/>
            <person name="Kao F.Y."/>
            <person name="Lin S.-J."/>
            <person name="Hsiao S.-H."/>
            <person name="Tseng I.C."/>
            <person name="Hsing Y.-I.C."/>
            <person name="Wu H.-P."/>
            <person name="Chen C.-S."/>
            <person name="Shaw J.-F."/>
            <person name="Wu J."/>
            <person name="Matsumoto T."/>
            <person name="Sasaki T."/>
            <person name="Chen H.-C."/>
            <person name="Chow T.-Y."/>
        </authorList>
    </citation>
    <scope>NUCLEOTIDE SEQUENCE [LARGE SCALE GENOMIC DNA]</scope>
    <source>
        <strain>cv. Nipponbare</strain>
    </source>
</reference>
<reference key="2">
    <citation type="journal article" date="2005" name="Nature">
        <title>The map-based sequence of the rice genome.</title>
        <authorList>
            <consortium name="International rice genome sequencing project (IRGSP)"/>
        </authorList>
    </citation>
    <scope>NUCLEOTIDE SEQUENCE [LARGE SCALE GENOMIC DNA]</scope>
    <source>
        <strain>cv. Nipponbare</strain>
    </source>
</reference>
<reference key="3">
    <citation type="journal article" date="2008" name="Nucleic Acids Res.">
        <title>The rice annotation project database (RAP-DB): 2008 update.</title>
        <authorList>
            <consortium name="The rice annotation project (RAP)"/>
        </authorList>
    </citation>
    <scope>GENOME REANNOTATION</scope>
    <source>
        <strain>cv. Nipponbare</strain>
    </source>
</reference>
<reference key="4">
    <citation type="journal article" date="2013" name="Rice">
        <title>Improvement of the Oryza sativa Nipponbare reference genome using next generation sequence and optical map data.</title>
        <authorList>
            <person name="Kawahara Y."/>
            <person name="de la Bastide M."/>
            <person name="Hamilton J.P."/>
            <person name="Kanamori H."/>
            <person name="McCombie W.R."/>
            <person name="Ouyang S."/>
            <person name="Schwartz D.C."/>
            <person name="Tanaka T."/>
            <person name="Wu J."/>
            <person name="Zhou S."/>
            <person name="Childs K.L."/>
            <person name="Davidson R.M."/>
            <person name="Lin H."/>
            <person name="Quesada-Ocampo L."/>
            <person name="Vaillancourt B."/>
            <person name="Sakai H."/>
            <person name="Lee S.S."/>
            <person name="Kim J."/>
            <person name="Numa H."/>
            <person name="Itoh T."/>
            <person name="Buell C.R."/>
            <person name="Matsumoto T."/>
        </authorList>
    </citation>
    <scope>GENOME REANNOTATION</scope>
    <source>
        <strain>cv. Nipponbare</strain>
    </source>
</reference>
<reference key="5">
    <citation type="journal article" date="2003" name="Science">
        <title>Collection, mapping, and annotation of over 28,000 cDNA clones from japonica rice.</title>
        <authorList>
            <consortium name="The rice full-length cDNA consortium"/>
        </authorList>
    </citation>
    <scope>NUCLEOTIDE SEQUENCE [LARGE SCALE MRNA] (ISOFORMS 1 AND 2)</scope>
    <source>
        <strain>cv. Nipponbare</strain>
    </source>
</reference>
<evidence type="ECO:0000250" key="1"/>
<evidence type="ECO:0000255" key="2"/>
<evidence type="ECO:0000303" key="3">
    <source>
    </source>
</evidence>
<evidence type="ECO:0000305" key="4"/>